<organism>
    <name type="scientific">Moorella thermoacetica (strain ATCC 39073 / JCM 9320)</name>
    <dbReference type="NCBI Taxonomy" id="264732"/>
    <lineage>
        <taxon>Bacteria</taxon>
        <taxon>Bacillati</taxon>
        <taxon>Bacillota</taxon>
        <taxon>Clostridia</taxon>
        <taxon>Moorellales</taxon>
        <taxon>Moorellaceae</taxon>
        <taxon>Moorella</taxon>
    </lineage>
</organism>
<accession>Q2RHT3</accession>
<proteinExistence type="inferred from homology"/>
<reference key="1">
    <citation type="journal article" date="2008" name="Environ. Microbiol.">
        <title>The complete genome sequence of Moorella thermoacetica (f. Clostridium thermoaceticum).</title>
        <authorList>
            <person name="Pierce E."/>
            <person name="Xie G."/>
            <person name="Barabote R.D."/>
            <person name="Saunders E."/>
            <person name="Han C.S."/>
            <person name="Detter J.C."/>
            <person name="Richardson P."/>
            <person name="Brettin T.S."/>
            <person name="Das A."/>
            <person name="Ljungdahl L.G."/>
            <person name="Ragsdale S.W."/>
        </authorList>
    </citation>
    <scope>NUCLEOTIDE SEQUENCE [LARGE SCALE GENOMIC DNA]</scope>
    <source>
        <strain>ATCC 39073 / JCM 9320</strain>
    </source>
</reference>
<dbReference type="EMBL" id="CP000232">
    <property type="protein sequence ID" value="ABC20006.1"/>
    <property type="molecule type" value="Genomic_DNA"/>
</dbReference>
<dbReference type="RefSeq" id="YP_430549.1">
    <property type="nucleotide sequence ID" value="NC_007644.1"/>
</dbReference>
<dbReference type="SMR" id="Q2RHT3"/>
<dbReference type="STRING" id="264732.Moth_1704"/>
<dbReference type="EnsemblBacteria" id="ABC20006">
    <property type="protein sequence ID" value="ABC20006"/>
    <property type="gene ID" value="Moth_1704"/>
</dbReference>
<dbReference type="KEGG" id="mta:Moth_1704"/>
<dbReference type="PATRIC" id="fig|264732.11.peg.1845"/>
<dbReference type="eggNOG" id="COG0217">
    <property type="taxonomic scope" value="Bacteria"/>
</dbReference>
<dbReference type="HOGENOM" id="CLU_062974_2_2_9"/>
<dbReference type="OrthoDB" id="9781053at2"/>
<dbReference type="GO" id="GO:0005829">
    <property type="term" value="C:cytosol"/>
    <property type="evidence" value="ECO:0007669"/>
    <property type="project" value="TreeGrafter"/>
</dbReference>
<dbReference type="GO" id="GO:0003677">
    <property type="term" value="F:DNA binding"/>
    <property type="evidence" value="ECO:0007669"/>
    <property type="project" value="UniProtKB-UniRule"/>
</dbReference>
<dbReference type="GO" id="GO:0006355">
    <property type="term" value="P:regulation of DNA-templated transcription"/>
    <property type="evidence" value="ECO:0007669"/>
    <property type="project" value="UniProtKB-UniRule"/>
</dbReference>
<dbReference type="FunFam" id="1.10.10.200:FF:000002">
    <property type="entry name" value="Probable transcriptional regulatory protein CLM62_37755"/>
    <property type="match status" value="1"/>
</dbReference>
<dbReference type="FunFam" id="3.30.70.980:FF:000002">
    <property type="entry name" value="Probable transcriptional regulatory protein YebC"/>
    <property type="match status" value="1"/>
</dbReference>
<dbReference type="Gene3D" id="1.10.10.200">
    <property type="match status" value="1"/>
</dbReference>
<dbReference type="Gene3D" id="3.30.70.980">
    <property type="match status" value="2"/>
</dbReference>
<dbReference type="HAMAP" id="MF_00693">
    <property type="entry name" value="Transcrip_reg_TACO1"/>
    <property type="match status" value="1"/>
</dbReference>
<dbReference type="InterPro" id="IPR017856">
    <property type="entry name" value="Integrase-like_N"/>
</dbReference>
<dbReference type="InterPro" id="IPR048300">
    <property type="entry name" value="TACO1_YebC-like_2nd/3rd_dom"/>
</dbReference>
<dbReference type="InterPro" id="IPR049083">
    <property type="entry name" value="TACO1_YebC_N"/>
</dbReference>
<dbReference type="InterPro" id="IPR002876">
    <property type="entry name" value="Transcrip_reg_TACO1-like"/>
</dbReference>
<dbReference type="InterPro" id="IPR026564">
    <property type="entry name" value="Transcrip_reg_TACO1-like_dom3"/>
</dbReference>
<dbReference type="InterPro" id="IPR029072">
    <property type="entry name" value="YebC-like"/>
</dbReference>
<dbReference type="NCBIfam" id="NF001030">
    <property type="entry name" value="PRK00110.1"/>
    <property type="match status" value="1"/>
</dbReference>
<dbReference type="NCBIfam" id="NF009044">
    <property type="entry name" value="PRK12378.1"/>
    <property type="match status" value="1"/>
</dbReference>
<dbReference type="NCBIfam" id="TIGR01033">
    <property type="entry name" value="YebC/PmpR family DNA-binding transcriptional regulator"/>
    <property type="match status" value="1"/>
</dbReference>
<dbReference type="PANTHER" id="PTHR12532:SF6">
    <property type="entry name" value="TRANSCRIPTIONAL REGULATORY PROTEIN YEBC-RELATED"/>
    <property type="match status" value="1"/>
</dbReference>
<dbReference type="PANTHER" id="PTHR12532">
    <property type="entry name" value="TRANSLATIONAL ACTIVATOR OF CYTOCHROME C OXIDASE 1"/>
    <property type="match status" value="1"/>
</dbReference>
<dbReference type="Pfam" id="PF20772">
    <property type="entry name" value="TACO1_YebC_N"/>
    <property type="match status" value="1"/>
</dbReference>
<dbReference type="Pfam" id="PF01709">
    <property type="entry name" value="Transcrip_reg"/>
    <property type="match status" value="1"/>
</dbReference>
<dbReference type="SUPFAM" id="SSF75625">
    <property type="entry name" value="YebC-like"/>
    <property type="match status" value="1"/>
</dbReference>
<evidence type="ECO:0000255" key="1">
    <source>
        <dbReference type="HAMAP-Rule" id="MF_00693"/>
    </source>
</evidence>
<gene>
    <name type="ordered locus">Moth_1704</name>
</gene>
<feature type="chain" id="PRO_0000257080" description="Probable transcriptional regulatory protein Moth_1704">
    <location>
        <begin position="1"/>
        <end position="252"/>
    </location>
</feature>
<comment type="subcellular location">
    <subcellularLocation>
        <location evidence="1">Cytoplasm</location>
    </subcellularLocation>
</comment>
<comment type="similarity">
    <text evidence="1">Belongs to the TACO1 family.</text>
</comment>
<sequence>MSGHSKWANIKNRKAKVDEKRGRLFTKIGREIIIAARMGGGDPEGNMRLKAAIAKAKAANMPNENIQRAIMRGTGELEGAAYEEMTYEGYGPGGVAMLLNIATDNRNRTASEIRYIFSRGGGNLGESGCVAWMFNPKGVITVEVPAGDKREEVILQAIEAGAEDVDDEDDEVLEIKTAPGDLEAVREALEASGVTITHAEVEMVPQTTVTIDDPETAGKVMRLIERLEDHDDVQAVYTNADIPAAIMDQLDI</sequence>
<name>Y1704_MOOTA</name>
<keyword id="KW-0963">Cytoplasm</keyword>
<keyword id="KW-0238">DNA-binding</keyword>
<keyword id="KW-0804">Transcription</keyword>
<keyword id="KW-0805">Transcription regulation</keyword>
<protein>
    <recommendedName>
        <fullName evidence="1">Probable transcriptional regulatory protein Moth_1704</fullName>
    </recommendedName>
</protein>